<sequence>MSKNKLSKGQQRRVNANHQRRLKTSKEKPDYDDNLFGEPDEGIVISRFGMHADVESADGDVHRCNIRRTIRSLVTGDRVVWRPGKPAAEGVNVKGIVEAVHERTSVLTRPDFYDGVKPIAANIDQIVIVSAILPELSLNIIDRYLVACETLQIEPIIVLNKIDLLDDEGMAFVNEQMDIYRNIGYRVLMVSSHTQDGLKPLEEALTGRISIFAGQSGVGKSSLLNALLGLQKEILTNDISDNSGLGQHTTTAARLYHFPHGGDVIDSPGVREFGLWHLEPEQITQGFVEFHDYLGLCKYRDCKHDTDPGCAIREAVEEGKIAETRFENYHRILESMAQVKTRKNFSDTDD</sequence>
<comment type="function">
    <text evidence="4 5 6 7 8 12 18 21">One of at least 4 proteins (Era, RbfA, RimM and RsgA/YjeQ) that assist in the late maturation steps of the functional core of the 30S ribosomal subunit (PubMed:18223068, PubMed:21102555, PubMed:21303937, PubMed:25904134, PubMed:27382067). Binds the 30S subunit contacting the head, platform, and rRNA helix 44, which may assist the last maturation stages (PubMed:21788480, PubMed:21960487). Removes RbfA from mature, but not immature 30S ribosomes in a GTP-dependent manner; 95% removal in the presence of GTP, 90% removal in GMP-PNP and 65% removal in the presence of GDP (PubMed:21102555, PubMed:25904134). Circulary permuted GTPase that catalyzes rapid hydrolysis of GTP with a slow catalytic turnover (PubMed:12220175). Dispensible for viability, but important for overall fitness. The intrinsic GTPase activity is stimulated by the presence of 30S (160-fold increase in kcat) or 70S (96-fold increase in kcat) ribosomes (PubMed:14973029). Mature 30S ribosomes stimulate intrinsic GTPase more than do immature 30S ribosomes (PubMed:25904134). Ribosome-associated GTPase activity is stimulated by RbfA (PubMed:21102555). The GTPase is inhibited by aminoglycoside antibiotics such as neomycin and paromycin (PubMed:15466596) streptomycin and spectinomycin (PubMed:15828870). This inhibition is not due to competition for binding sites on the 30S or 70S ribosome (PubMed:15828870).</text>
</comment>
<comment type="cofactor">
    <cofactor evidence="1">
        <name>Zn(2+)</name>
        <dbReference type="ChEBI" id="CHEBI:29105"/>
    </cofactor>
    <text evidence="1">Binds 1 zinc ion per subunit.</text>
</comment>
<comment type="biophysicochemical properties">
    <kinetics>
        <KM evidence="4">0.41 mM for GTP</KM>
        <KM evidence="4">1 mM for dATP</KM>
        <KM evidence="4">1.2 mM for ATP</KM>
        <KM evidence="4">1.3 mM for ITP</KM>
        <KM evidence="4">1.6 mM for dGTP</KM>
        <KM evidence="4">2.4 mM for CTP</KM>
        <text evidence="4">Measured in the absence of 30S ribosomes, kcat is 8.1 h(-1) for GTP, 5.2 for dATP, 3.5 for ATP, 4.5 for ITP, 7.1 for dGTP, 2.1 for CTP.</text>
    </kinetics>
</comment>
<comment type="subunit">
    <text evidence="5 6 8 10 11 12 13 16">Monomer (Probable). All of the protein is associated with ribosomes; the ratio is substoichiometric at 1:200 RsgA/ribosome (PubMed:14973029). Association is tightest with the 30S subunit in the presence of the non-hydrolyzable GTP analog GMP-PNP (PubMed:14973029, PubMed:15466596). 2 cryoelectron microscopy (cryo-EM) structures in complex with 30S ribosomes have been resolved; the protein is determined to bind to different but partially overlapping regions of the 30S ribosomal subunit (PubMed:21788480, PubMed:21960487). One cryo-EM study suggests it contacts ribosomal proteins uS3, uS12 and uS13 as well as 16S rRNA (PubMed:21788480). Another cryo-EM study shows it to bind 16S rRNA, no ribosomal proteins, and to cover the sites of intersubunit bridges B2a, B3 and B7a (PubMed:21960487). Has a significant preference for mature versus immature 30S ribosomes in the presence of GMP-PNP (PubMed:21102555, PubMed:27382067). Another study shows it binds equally well to mature and immature 30S ribosomal subunits in the presence of GMP-PNP (PubMed:25904134).</text>
</comment>
<comment type="subcellular location">
    <subcellularLocation>
        <location evidence="1 5">Cytoplasm</location>
    </subcellularLocation>
    <text evidence="5">Associates with 30S ribosomes (PubMed:14973029).</text>
</comment>
<comment type="domain">
    <text evidence="20">Has 3 domains; an N-terminal OB-like domain (about residues 1-100), a central, circularly permutated GTPase module (residues 104-270) and the C-terminal zinc-finger domain (residues 280 to 350) (PubMed:25904134). The C-terminal domain has 2 regions; the zinc-binding domain (residues 287-319) is required for binding to 30S ribosomes while the extreme C-terminus (residues 320-350) helps remove RbfA from the mature 30S subunit.</text>
</comment>
<comment type="disruption phenotype">
    <text evidence="6 8 9 12 13">Reduced growth rate, reduced 70S ribosomes, accumulation of 17S rRNA (the precursor of 16S rRNA) (PubMed:15466596, PubMed:21303937, PubMed:25904134, PubMed:27382067). Ribosomal proteins uS2 and bS21 not found in 30S subunits, decreased uS3 and RbfA in 30S subunits, distortion of rRNA helix 44 near the decoding center (PubMed:21303937, PubMed:27382067). The phenotype is partially suppressed by overexpression of a number of genes involved in ribosome function, including infB, era and ksgA (PubMed:15466596). Double rbfA-rsgA deletion mutants have the same phenotype as single mutants (PubMed:21102555). Single rgsA deletion is suppressed by a number of mutants in RbfA but not by wild-type RbfA; in all the RbfA mutants less RbfA is found bound to the 30S ribosome (PubMed:21102555).</text>
</comment>
<comment type="similarity">
    <text evidence="1">Belongs to the TRAFAC class YlqF/YawG GTPase family. RsgA subfamily.</text>
</comment>
<comment type="caution">
    <text evidence="16 17">Was initially characterized with a propeptide of 20 residues; this is now thought to be the result of in vitro proteolysis when the protein is overexpressed (PubMed:12220175, PubMed:14973029).</text>
</comment>
<comment type="sequence caution" evidence="15">
    <conflict type="erroneous initiation">
        <sequence resource="EMBL-CDS" id="AAA97060"/>
    </conflict>
    <text>Truncated N-terminus.</text>
</comment>
<accession>P39286</accession>
<accession>Q2M6E1</accession>
<protein>
    <recommendedName>
        <fullName evidence="1">Small ribosomal subunit biogenesis GTPase RsgA</fullName>
        <ecNumber evidence="1">3.6.1.-</ecNumber>
    </recommendedName>
</protein>
<name>RSGA_ECOLI</name>
<gene>
    <name evidence="1 14" type="primary">rsgA</name>
    <name type="synonym">engC</name>
    <name type="synonym">yjeQ</name>
    <name type="ordered locus">b4161</name>
    <name type="ordered locus">JW4122</name>
</gene>
<feature type="chain" id="PRO_0000008149" description="Small ribosomal subunit biogenesis GTPase RsgA">
    <location>
        <begin position="1"/>
        <end position="350"/>
    </location>
</feature>
<feature type="domain" description="CP-type G" evidence="2">
    <location>
        <begin position="104"/>
        <end position="273"/>
    </location>
</feature>
<feature type="region of interest" description="Necessary for association with the ribosome and for stimulation of GTPase activity by 30S ribosomes" evidence="5">
    <location>
        <begin position="1"/>
        <end position="113"/>
    </location>
</feature>
<feature type="region of interest" description="Disordered" evidence="3">
    <location>
        <begin position="1"/>
        <end position="33"/>
    </location>
</feature>
<feature type="region of interest" description="Necessary for GMP-PNP-dependent association with the 30S ribosomal subunit" evidence="5 16 19">
    <location>
        <begin position="1"/>
        <end position="20"/>
    </location>
</feature>
<feature type="region of interest" description="Required for binding to mature and immature 30S ribosomes" evidence="12">
    <location>
        <begin position="287"/>
        <end position="319"/>
    </location>
</feature>
<feature type="region of interest" description="Required to remove RbfA from mature 30S ribosomes" evidence="12">
    <location>
        <begin position="320"/>
        <end position="350"/>
    </location>
</feature>
<feature type="compositionally biased region" description="Polar residues" evidence="3">
    <location>
        <begin position="1"/>
        <end position="17"/>
    </location>
</feature>
<feature type="binding site" evidence="1">
    <location>
        <begin position="160"/>
        <end position="163"/>
    </location>
    <ligand>
        <name>GTP</name>
        <dbReference type="ChEBI" id="CHEBI:37565"/>
    </ligand>
</feature>
<feature type="binding site" evidence="1">
    <location>
        <begin position="214"/>
        <end position="222"/>
    </location>
    <ligand>
        <name>GTP</name>
        <dbReference type="ChEBI" id="CHEBI:37565"/>
    </ligand>
</feature>
<feature type="binding site" evidence="1">
    <location>
        <position position="297"/>
    </location>
    <ligand>
        <name>Zn(2+)</name>
        <dbReference type="ChEBI" id="CHEBI:29105"/>
    </ligand>
</feature>
<feature type="binding site" evidence="1">
    <location>
        <position position="302"/>
    </location>
    <ligand>
        <name>Zn(2+)</name>
        <dbReference type="ChEBI" id="CHEBI:29105"/>
    </ligand>
</feature>
<feature type="binding site" evidence="1">
    <location>
        <position position="304"/>
    </location>
    <ligand>
        <name>Zn(2+)</name>
        <dbReference type="ChEBI" id="CHEBI:29105"/>
    </ligand>
</feature>
<feature type="binding site" evidence="1">
    <location>
        <position position="310"/>
    </location>
    <ligand>
        <name>Zn(2+)</name>
        <dbReference type="ChEBI" id="CHEBI:29105"/>
    </ligand>
</feature>
<feature type="mutagenesis site" description="Loss of GMP-PNP-dependent association with 30S ribosomal subunit, increased association with 50S and 70S ribosomes." evidence="5">
    <location>
        <begin position="1"/>
        <end position="20"/>
    </location>
</feature>
<feature type="mutagenesis site" description="Reduction in GTPase activity, 38% of wild-type kcat for GTP. Strong reduction, 5.2% of wild-type kcat for GTP; when associated with A-221." evidence="4">
    <original>K</original>
    <variation>A</variation>
    <location>
        <position position="220"/>
    </location>
</feature>
<feature type="mutagenesis site" description="Reduction in GTPase activity, 22% of wild-type kcat for GTP. GTPase activity not stimulated by 30S ribosomes (PubMed:14973029). Strong reduction, 5.2% of wild-type kcat for GTP; when associated with A-220." evidence="4 5">
    <original>S</original>
    <variation>A</variation>
    <location>
        <position position="221"/>
    </location>
</feature>
<feature type="mutagenesis site" description="Loss of GTPase activity, does not dissociate RbfA." evidence="8">
    <original>T</original>
    <variation>A</variation>
    <location>
        <position position="250"/>
    </location>
</feature>
<feature type="mutagenesis site" description="About 2-fold decreased binding to mature and immature 30S ribosomes, GTPase activity stimulated by ribosomes." evidence="12">
    <original>KYR</original>
    <variation>AYA</variation>
    <location>
        <begin position="298"/>
        <end position="300"/>
    </location>
</feature>
<feature type="mutagenesis site" description="Slightly increased specific binding to mature and immature 30S ribosomes, GTPase activity not stimulated by ribosomes. No longer removes RbfA from mature 30S ribosomes, increases RbfA-binding about 5-fold. Does not complement a deletion mutant in vivo, fewer 70S ribosomes, slower growth than deletion mutant." evidence="12">
    <location>
        <begin position="320"/>
        <end position="350"/>
    </location>
</feature>
<feature type="strand" evidence="24">
    <location>
        <begin position="40"/>
        <end position="48"/>
    </location>
</feature>
<feature type="strand" evidence="24">
    <location>
        <begin position="51"/>
        <end position="56"/>
    </location>
</feature>
<feature type="strand" evidence="24">
    <location>
        <begin position="61"/>
        <end position="66"/>
    </location>
</feature>
<feature type="strand" evidence="24">
    <location>
        <begin position="78"/>
        <end position="82"/>
    </location>
</feature>
<feature type="strand" evidence="24">
    <location>
        <begin position="95"/>
        <end position="100"/>
    </location>
</feature>
<feature type="strand" evidence="24">
    <location>
        <begin position="104"/>
        <end position="111"/>
    </location>
</feature>
<feature type="turn" evidence="24">
    <location>
        <begin position="112"/>
        <end position="114"/>
    </location>
</feature>
<feature type="strand" evidence="24">
    <location>
        <begin position="115"/>
        <end position="122"/>
    </location>
</feature>
<feature type="strand" evidence="24">
    <location>
        <begin position="125"/>
        <end position="131"/>
    </location>
</feature>
<feature type="turn" evidence="24">
    <location>
        <begin position="132"/>
        <end position="134"/>
    </location>
</feature>
<feature type="helix" evidence="24">
    <location>
        <begin position="138"/>
        <end position="150"/>
    </location>
</feature>
<feature type="strand" evidence="24">
    <location>
        <begin position="154"/>
        <end position="160"/>
    </location>
</feature>
<feature type="turn" evidence="24">
    <location>
        <begin position="162"/>
        <end position="164"/>
    </location>
</feature>
<feature type="helix" evidence="24">
    <location>
        <begin position="167"/>
        <end position="181"/>
    </location>
</feature>
<feature type="turn" evidence="24">
    <location>
        <begin position="182"/>
        <end position="184"/>
    </location>
</feature>
<feature type="strand" evidence="24">
    <location>
        <begin position="187"/>
        <end position="189"/>
    </location>
</feature>
<feature type="turn" evidence="24">
    <location>
        <begin position="192"/>
        <end position="195"/>
    </location>
</feature>
<feature type="helix" evidence="24">
    <location>
        <begin position="198"/>
        <end position="205"/>
    </location>
</feature>
<feature type="strand" evidence="24">
    <location>
        <begin position="208"/>
        <end position="213"/>
    </location>
</feature>
<feature type="helix" evidence="24">
    <location>
        <begin position="220"/>
        <end position="228"/>
    </location>
</feature>
<feature type="strand" evidence="24">
    <location>
        <begin position="254"/>
        <end position="257"/>
    </location>
</feature>
<feature type="strand" evidence="24">
    <location>
        <begin position="259"/>
        <end position="266"/>
    </location>
</feature>
<feature type="strand" evidence="24">
    <location>
        <begin position="276"/>
        <end position="278"/>
    </location>
</feature>
<feature type="helix" evidence="24">
    <location>
        <begin position="280"/>
        <end position="286"/>
    </location>
</feature>
<feature type="helix" evidence="24">
    <location>
        <begin position="288"/>
        <end position="293"/>
    </location>
</feature>
<feature type="strand" evidence="24">
    <location>
        <begin position="297"/>
        <end position="299"/>
    </location>
</feature>
<feature type="strand" evidence="24">
    <location>
        <begin position="304"/>
        <end position="306"/>
    </location>
</feature>
<feature type="helix" evidence="24">
    <location>
        <begin position="311"/>
        <end position="317"/>
    </location>
</feature>
<feature type="helix" evidence="24">
    <location>
        <begin position="323"/>
        <end position="338"/>
    </location>
</feature>
<organism>
    <name type="scientific">Escherichia coli (strain K12)</name>
    <dbReference type="NCBI Taxonomy" id="83333"/>
    <lineage>
        <taxon>Bacteria</taxon>
        <taxon>Pseudomonadati</taxon>
        <taxon>Pseudomonadota</taxon>
        <taxon>Gammaproteobacteria</taxon>
        <taxon>Enterobacterales</taxon>
        <taxon>Enterobacteriaceae</taxon>
        <taxon>Escherichia</taxon>
    </lineage>
</organism>
<proteinExistence type="evidence at protein level"/>
<keyword id="KW-0002">3D-structure</keyword>
<keyword id="KW-0963">Cytoplasm</keyword>
<keyword id="KW-0903">Direct protein sequencing</keyword>
<keyword id="KW-0342">GTP-binding</keyword>
<keyword id="KW-0378">Hydrolase</keyword>
<keyword id="KW-0479">Metal-binding</keyword>
<keyword id="KW-0547">Nucleotide-binding</keyword>
<keyword id="KW-1185">Reference proteome</keyword>
<keyword id="KW-0690">Ribosome biogenesis</keyword>
<keyword id="KW-0694">RNA-binding</keyword>
<keyword id="KW-0699">rRNA-binding</keyword>
<keyword id="KW-0862">Zinc</keyword>
<dbReference type="EC" id="3.6.1.-" evidence="1"/>
<dbReference type="EMBL" id="U14003">
    <property type="protein sequence ID" value="AAA97060.1"/>
    <property type="status" value="ALT_INIT"/>
    <property type="molecule type" value="Genomic_DNA"/>
</dbReference>
<dbReference type="EMBL" id="U00096">
    <property type="protein sequence ID" value="AAC77121.2"/>
    <property type="molecule type" value="Genomic_DNA"/>
</dbReference>
<dbReference type="EMBL" id="AP009048">
    <property type="protein sequence ID" value="BAE78165.1"/>
    <property type="molecule type" value="Genomic_DNA"/>
</dbReference>
<dbReference type="PIR" id="S56389">
    <property type="entry name" value="S56389"/>
</dbReference>
<dbReference type="RefSeq" id="NP_418585.4">
    <property type="nucleotide sequence ID" value="NC_000913.3"/>
</dbReference>
<dbReference type="RefSeq" id="WP_000041964.1">
    <property type="nucleotide sequence ID" value="NZ_LN832404.1"/>
</dbReference>
<dbReference type="PDB" id="2YKR">
    <property type="method" value="EM"/>
    <property type="resolution" value="9.80 A"/>
    <property type="chains" value="W=1-350"/>
</dbReference>
<dbReference type="PDB" id="4A2I">
    <property type="method" value="EM"/>
    <property type="resolution" value="16.50 A"/>
    <property type="chains" value="V=35-337"/>
</dbReference>
<dbReference type="PDB" id="5NO2">
    <property type="method" value="EM"/>
    <property type="resolution" value="5.16 A"/>
    <property type="chains" value="Z=34-346"/>
</dbReference>
<dbReference type="PDB" id="5NO3">
    <property type="method" value="EM"/>
    <property type="resolution" value="5.16 A"/>
    <property type="chains" value="Z=34-346"/>
</dbReference>
<dbReference type="PDB" id="5NO4">
    <property type="method" value="EM"/>
    <property type="resolution" value="5.16 A"/>
    <property type="chains" value="Z=34-346"/>
</dbReference>
<dbReference type="PDB" id="5UZ4">
    <property type="method" value="EM"/>
    <property type="resolution" value="5.80 A"/>
    <property type="chains" value="Z=6-339"/>
</dbReference>
<dbReference type="PDB" id="7BOI">
    <property type="method" value="EM"/>
    <property type="resolution" value="2.98 A"/>
    <property type="chains" value="W=1-350"/>
</dbReference>
<dbReference type="PDB" id="7NAR">
    <property type="method" value="EM"/>
    <property type="resolution" value="3.00 A"/>
    <property type="chains" value="W=1-350"/>
</dbReference>
<dbReference type="PDBsum" id="2YKR"/>
<dbReference type="PDBsum" id="4A2I"/>
<dbReference type="PDBsum" id="5NO2"/>
<dbReference type="PDBsum" id="5NO3"/>
<dbReference type="PDBsum" id="5NO4"/>
<dbReference type="PDBsum" id="5UZ4"/>
<dbReference type="PDBsum" id="7BOI"/>
<dbReference type="PDBsum" id="7NAR"/>
<dbReference type="EMDB" id="EMD-12244"/>
<dbReference type="EMDB" id="EMD-12245"/>
<dbReference type="EMDB" id="EMD-1884"/>
<dbReference type="EMDB" id="EMD-3661"/>
<dbReference type="EMDB" id="EMD-3662"/>
<dbReference type="EMDB" id="EMD-3663"/>
<dbReference type="EMDB" id="EMD-8621"/>
<dbReference type="SMR" id="P39286"/>
<dbReference type="BioGRID" id="4261080">
    <property type="interactions" value="610"/>
</dbReference>
<dbReference type="DIP" id="DIP-12581N"/>
<dbReference type="FunCoup" id="P39286">
    <property type="interactions" value="471"/>
</dbReference>
<dbReference type="IntAct" id="P39286">
    <property type="interactions" value="33"/>
</dbReference>
<dbReference type="MINT" id="P39286"/>
<dbReference type="STRING" id="511145.b4161"/>
<dbReference type="jPOST" id="P39286"/>
<dbReference type="PaxDb" id="511145-b4161"/>
<dbReference type="EnsemblBacteria" id="AAC77121">
    <property type="protein sequence ID" value="AAC77121"/>
    <property type="gene ID" value="b4161"/>
</dbReference>
<dbReference type="GeneID" id="948674"/>
<dbReference type="KEGG" id="ecj:JW4122"/>
<dbReference type="KEGG" id="eco:b4161"/>
<dbReference type="KEGG" id="ecoc:C3026_22490"/>
<dbReference type="PATRIC" id="fig|1411691.4.peg.2537"/>
<dbReference type="EchoBASE" id="EB2372"/>
<dbReference type="eggNOG" id="COG1162">
    <property type="taxonomic scope" value="Bacteria"/>
</dbReference>
<dbReference type="HOGENOM" id="CLU_033617_2_0_6"/>
<dbReference type="InParanoid" id="P39286"/>
<dbReference type="OMA" id="CLVAAYD"/>
<dbReference type="OrthoDB" id="9809485at2"/>
<dbReference type="PhylomeDB" id="P39286"/>
<dbReference type="BioCyc" id="EcoCyc:G7841-MONOMER"/>
<dbReference type="BioCyc" id="MetaCyc:G7841-MONOMER"/>
<dbReference type="SABIO-RK" id="P39286"/>
<dbReference type="PRO" id="PR:P39286"/>
<dbReference type="Proteomes" id="UP000000625">
    <property type="component" value="Chromosome"/>
</dbReference>
<dbReference type="GO" id="GO:0005829">
    <property type="term" value="C:cytosol"/>
    <property type="evidence" value="ECO:0000314"/>
    <property type="project" value="EcoCyc"/>
</dbReference>
<dbReference type="GO" id="GO:0019003">
    <property type="term" value="F:GDP binding"/>
    <property type="evidence" value="ECO:0000314"/>
    <property type="project" value="EcoCyc"/>
</dbReference>
<dbReference type="GO" id="GO:0005525">
    <property type="term" value="F:GTP binding"/>
    <property type="evidence" value="ECO:0007669"/>
    <property type="project" value="UniProtKB-UniRule"/>
</dbReference>
<dbReference type="GO" id="GO:0003924">
    <property type="term" value="F:GTPase activity"/>
    <property type="evidence" value="ECO:0000314"/>
    <property type="project" value="EcoCyc"/>
</dbReference>
<dbReference type="GO" id="GO:0097216">
    <property type="term" value="F:guanosine tetraphosphate binding"/>
    <property type="evidence" value="ECO:0000314"/>
    <property type="project" value="EcoCyc"/>
</dbReference>
<dbReference type="GO" id="GO:0046872">
    <property type="term" value="F:metal ion binding"/>
    <property type="evidence" value="ECO:0007669"/>
    <property type="project" value="UniProtKB-KW"/>
</dbReference>
<dbReference type="GO" id="GO:0019843">
    <property type="term" value="F:rRNA binding"/>
    <property type="evidence" value="ECO:0000314"/>
    <property type="project" value="DisProt"/>
</dbReference>
<dbReference type="GO" id="GO:0000028">
    <property type="term" value="P:ribosomal small subunit assembly"/>
    <property type="evidence" value="ECO:0000314"/>
    <property type="project" value="EcoCyc"/>
</dbReference>
<dbReference type="GO" id="GO:0042274">
    <property type="term" value="P:ribosomal small subunit biogenesis"/>
    <property type="evidence" value="ECO:0000315"/>
    <property type="project" value="EcoCyc"/>
</dbReference>
<dbReference type="CDD" id="cd01854">
    <property type="entry name" value="YjeQ_EngC"/>
    <property type="match status" value="1"/>
</dbReference>
<dbReference type="FunFam" id="1.10.40.50:FF:000001">
    <property type="entry name" value="Small ribosomal subunit biogenesis GTPase RsgA"/>
    <property type="match status" value="1"/>
</dbReference>
<dbReference type="FunFam" id="2.40.50.140:FF:000122">
    <property type="entry name" value="Small ribosomal subunit biogenesis GTPase RsgA"/>
    <property type="match status" value="1"/>
</dbReference>
<dbReference type="FunFam" id="3.40.50.300:FF:000389">
    <property type="entry name" value="Small ribosomal subunit biogenesis GTPase RsgA"/>
    <property type="match status" value="1"/>
</dbReference>
<dbReference type="Gene3D" id="2.40.50.140">
    <property type="entry name" value="Nucleic acid-binding proteins"/>
    <property type="match status" value="1"/>
</dbReference>
<dbReference type="Gene3D" id="3.40.50.300">
    <property type="entry name" value="P-loop containing nucleotide triphosphate hydrolases"/>
    <property type="match status" value="1"/>
</dbReference>
<dbReference type="Gene3D" id="1.10.40.50">
    <property type="entry name" value="Probable gtpase engc, domain 3"/>
    <property type="match status" value="1"/>
</dbReference>
<dbReference type="HAMAP" id="MF_01820">
    <property type="entry name" value="GTPase_RsgA"/>
    <property type="match status" value="1"/>
</dbReference>
<dbReference type="InterPro" id="IPR030378">
    <property type="entry name" value="G_CP_dom"/>
</dbReference>
<dbReference type="InterPro" id="IPR012340">
    <property type="entry name" value="NA-bd_OB-fold"/>
</dbReference>
<dbReference type="InterPro" id="IPR027417">
    <property type="entry name" value="P-loop_NTPase"/>
</dbReference>
<dbReference type="InterPro" id="IPR004881">
    <property type="entry name" value="Ribosome_biogen_GTPase_RsgA"/>
</dbReference>
<dbReference type="InterPro" id="IPR010914">
    <property type="entry name" value="RsgA_GTPase_dom"/>
</dbReference>
<dbReference type="NCBIfam" id="NF008931">
    <property type="entry name" value="PRK12288.1"/>
    <property type="match status" value="1"/>
</dbReference>
<dbReference type="NCBIfam" id="TIGR00157">
    <property type="entry name" value="ribosome small subunit-dependent GTPase A"/>
    <property type="match status" value="1"/>
</dbReference>
<dbReference type="PANTHER" id="PTHR32120">
    <property type="entry name" value="SMALL RIBOSOMAL SUBUNIT BIOGENESIS GTPASE RSGA"/>
    <property type="match status" value="1"/>
</dbReference>
<dbReference type="PANTHER" id="PTHR32120:SF11">
    <property type="entry name" value="SMALL RIBOSOMAL SUBUNIT BIOGENESIS GTPASE RSGA 1, MITOCHONDRIAL-RELATED"/>
    <property type="match status" value="1"/>
</dbReference>
<dbReference type="Pfam" id="PF03193">
    <property type="entry name" value="RsgA_GTPase"/>
    <property type="match status" value="1"/>
</dbReference>
<dbReference type="SUPFAM" id="SSF52540">
    <property type="entry name" value="P-loop containing nucleoside triphosphate hydrolases"/>
    <property type="match status" value="1"/>
</dbReference>
<dbReference type="PROSITE" id="PS50936">
    <property type="entry name" value="ENGC_GTPASE"/>
    <property type="match status" value="1"/>
</dbReference>
<dbReference type="PROSITE" id="PS51721">
    <property type="entry name" value="G_CP"/>
    <property type="match status" value="1"/>
</dbReference>
<evidence type="ECO:0000255" key="1">
    <source>
        <dbReference type="HAMAP-Rule" id="MF_01820"/>
    </source>
</evidence>
<evidence type="ECO:0000255" key="2">
    <source>
        <dbReference type="PROSITE-ProRule" id="PRU01058"/>
    </source>
</evidence>
<evidence type="ECO:0000256" key="3">
    <source>
        <dbReference type="SAM" id="MobiDB-lite"/>
    </source>
</evidence>
<evidence type="ECO:0000269" key="4">
    <source>
    </source>
</evidence>
<evidence type="ECO:0000269" key="5">
    <source>
    </source>
</evidence>
<evidence type="ECO:0000269" key="6">
    <source>
    </source>
</evidence>
<evidence type="ECO:0000269" key="7">
    <source>
    </source>
</evidence>
<evidence type="ECO:0000269" key="8">
    <source>
    </source>
</evidence>
<evidence type="ECO:0000269" key="9">
    <source>
    </source>
</evidence>
<evidence type="ECO:0000269" key="10">
    <source>
    </source>
</evidence>
<evidence type="ECO:0000269" key="11">
    <source>
    </source>
</evidence>
<evidence type="ECO:0000269" key="12">
    <source>
    </source>
</evidence>
<evidence type="ECO:0000269" key="13">
    <source>
    </source>
</evidence>
<evidence type="ECO:0000303" key="14">
    <source>
    </source>
</evidence>
<evidence type="ECO:0000305" key="15"/>
<evidence type="ECO:0000305" key="16">
    <source>
    </source>
</evidence>
<evidence type="ECO:0000305" key="17">
    <source>
    </source>
</evidence>
<evidence type="ECO:0000305" key="18">
    <source>
    </source>
</evidence>
<evidence type="ECO:0000305" key="19">
    <source>
    </source>
</evidence>
<evidence type="ECO:0000305" key="20">
    <source>
    </source>
</evidence>
<evidence type="ECO:0000305" key="21">
    <source>
    </source>
</evidence>
<evidence type="ECO:0007744" key="22">
    <source>
        <dbReference type="PDB" id="2YKR"/>
    </source>
</evidence>
<evidence type="ECO:0007744" key="23">
    <source>
        <dbReference type="PDB" id="4A2I"/>
    </source>
</evidence>
<evidence type="ECO:0007829" key="24">
    <source>
        <dbReference type="PDB" id="7BOI"/>
    </source>
</evidence>
<reference key="1">
    <citation type="journal article" date="1995" name="Nucleic Acids Res.">
        <title>Analysis of the Escherichia coli genome VI: DNA sequence of the region from 92.8 through 100 minutes.</title>
        <authorList>
            <person name="Burland V.D."/>
            <person name="Plunkett G. III"/>
            <person name="Sofia H.J."/>
            <person name="Daniels D.L."/>
            <person name="Blattner F.R."/>
        </authorList>
    </citation>
    <scope>NUCLEOTIDE SEQUENCE [LARGE SCALE GENOMIC DNA]</scope>
    <source>
        <strain>K12 / MG1655 / ATCC 47076</strain>
    </source>
</reference>
<reference key="2">
    <citation type="journal article" date="1997" name="Science">
        <title>The complete genome sequence of Escherichia coli K-12.</title>
        <authorList>
            <person name="Blattner F.R."/>
            <person name="Plunkett G. III"/>
            <person name="Bloch C.A."/>
            <person name="Perna N.T."/>
            <person name="Burland V."/>
            <person name="Riley M."/>
            <person name="Collado-Vides J."/>
            <person name="Glasner J.D."/>
            <person name="Rode C.K."/>
            <person name="Mayhew G.F."/>
            <person name="Gregor J."/>
            <person name="Davis N.W."/>
            <person name="Kirkpatrick H.A."/>
            <person name="Goeden M.A."/>
            <person name="Rose D.J."/>
            <person name="Mau B."/>
            <person name="Shao Y."/>
        </authorList>
    </citation>
    <scope>NUCLEOTIDE SEQUENCE [LARGE SCALE GENOMIC DNA]</scope>
    <source>
        <strain>K12 / MG1655 / ATCC 47076</strain>
    </source>
</reference>
<reference key="3">
    <citation type="journal article" date="2006" name="Mol. Syst. Biol.">
        <title>Highly accurate genome sequences of Escherichia coli K-12 strains MG1655 and W3110.</title>
        <authorList>
            <person name="Hayashi K."/>
            <person name="Morooka N."/>
            <person name="Yamamoto Y."/>
            <person name="Fujita K."/>
            <person name="Isono K."/>
            <person name="Choi S."/>
            <person name="Ohtsubo E."/>
            <person name="Baba T."/>
            <person name="Wanner B.L."/>
            <person name="Mori H."/>
            <person name="Horiuchi T."/>
        </authorList>
    </citation>
    <scope>NUCLEOTIDE SEQUENCE [LARGE SCALE GENOMIC DNA]</scope>
    <source>
        <strain>K12 / W3110 / ATCC 27325 / DSM 5911</strain>
    </source>
</reference>
<reference key="4">
    <citation type="journal article" date="1998" name="Nat. Biotechnol.">
        <title>A genome-based approach for the identification of essential bacterial genes.</title>
        <authorList>
            <person name="Arigoni F."/>
            <person name="Talabot F."/>
            <person name="Peitsch M.C."/>
            <person name="Edgerton M.D."/>
            <person name="Meldrum E."/>
            <person name="Allet E."/>
            <person name="Fish R."/>
            <person name="Jamotte T."/>
            <person name="Curchod M.-L."/>
            <person name="Loferer H."/>
        </authorList>
    </citation>
    <scope>IDENTIFICATION</scope>
</reference>
<reference key="5">
    <citation type="journal article" date="2002" name="Biochemistry">
        <title>YjeQ, an essential, conserved, uncharacterized protein from Escherichia coli, is an unusual GTPase with circularly permuted G-motifs and marked burst kinetics.</title>
        <authorList>
            <person name="Daigle D.M."/>
            <person name="Rossi L."/>
            <person name="Berghuis A.M."/>
            <person name="Aravind L."/>
            <person name="Koonin E.V."/>
            <person name="Brown E.D."/>
        </authorList>
    </citation>
    <scope>PARTIAL PROTEIN SEQUENCE</scope>
    <scope>FUNCTION</scope>
    <scope>BIOPHYSICOCHEMICAL PROPERTIES</scope>
    <scope>SUBUNIT</scope>
    <scope>MUTAGENESIS OF LYS-220 AND SER-221</scope>
    <scope>GDP-BINDING</scope>
    <source>
        <strain>K12 / MG1655 / ATCC 47076</strain>
    </source>
</reference>
<reference key="6">
    <citation type="journal article" date="2004" name="J. Bacteriol.">
        <title>Studies of the interaction of Escherichia coli YjeQ with the ribosome in vitro.</title>
        <authorList>
            <person name="Daigle D.M."/>
            <person name="Brown E.D."/>
        </authorList>
    </citation>
    <scope>FUNCTION</scope>
    <scope>ASSOCIATION WITH 30S RIBOSOMAL SUBUNIT</scope>
    <scope>SUBCELLULAR LOCATION</scope>
    <scope>MUTAGENESIS OF 1-MET--ARG-20 AND SER-221</scope>
    <source>
        <strain>K12 / MG1655 / ATCC 47076</strain>
    </source>
</reference>
<reference key="7">
    <citation type="journal article" date="2004" name="Nucleic Acids Res.">
        <title>A novel GTPase activated by the small subunit of ribosome.</title>
        <authorList>
            <person name="Himeno H."/>
            <person name="Hanawa-Suetsugu K."/>
            <person name="Kimura T."/>
            <person name="Takagi K."/>
            <person name="Sugiyama W."/>
            <person name="Shirata S."/>
            <person name="Mikami T."/>
            <person name="Odagiri F."/>
            <person name="Osanai Y."/>
            <person name="Watanabe D."/>
            <person name="Goto S."/>
            <person name="Kalachnyuk L."/>
            <person name="Ushida C."/>
            <person name="Muto A."/>
        </authorList>
    </citation>
    <scope>FUNCTION</scope>
    <scope>ASSOCIATION WITH 30S RIBOSOMAL SUBUNIT</scope>
    <scope>DISRUPTION PHENOTYPE</scope>
    <scope>EFFECT OF ANTIBIOTICS ON GTPASE</scope>
    <source>
        <strain>K12</strain>
    </source>
</reference>
<reference key="8">
    <citation type="journal article" date="2005" name="Biochem. J.">
        <title>Characterization of the Bacillus subtilis GTPase YloQ and its role in ribosome function.</title>
        <authorList>
            <person name="Campbell T.L."/>
            <person name="Daigle D.M."/>
            <person name="Brown E.D."/>
        </authorList>
    </citation>
    <scope>FUNCTION</scope>
    <scope>EFFECT OF ANTIBIOTICS ON GTPASE ACTIVITY</scope>
    <source>
        <strain>K12 / MG1655 / ATCC 47076</strain>
    </source>
</reference>
<reference key="9">
    <citation type="journal article" date="2008" name="J. Bacteriol.">
        <title>Genetic interaction screens with ordered overexpression and deletion clone sets implicate the Escherichia coli GTPase YjeQ in late ribosome biogenesis.</title>
        <authorList>
            <person name="Campbell T.L."/>
            <person name="Brown E.D."/>
        </authorList>
    </citation>
    <scope>FUNCTION</scope>
    <scope>GENETIC INTERACTION</scope>
    <source>
        <strain>K12</strain>
    </source>
</reference>
<reference key="10">
    <citation type="journal article" date="2011" name="EMBO J.">
        <title>RsgA releases RbfA from 30S ribosome during a late stage of ribosome biosynthesis.</title>
        <authorList>
            <person name="Goto S."/>
            <person name="Kato S."/>
            <person name="Kimura T."/>
            <person name="Muto A."/>
            <person name="Himeno H."/>
        </authorList>
    </citation>
    <scope>FUNCTION</scope>
    <scope>SUBUNIT</scope>
    <scope>DISRUPTION PHENOTYPE</scope>
    <scope>MUTAGENESIS OF THR-250</scope>
    <source>
        <strain>K12 / W3110 / ATCC 27325 / DSM 5911</strain>
    </source>
</reference>
<reference key="11">
    <citation type="journal article" date="2011" name="RNA">
        <title>Understanding ribosome assembly: the structure of in vivo assembled immature 30S subunits revealed by cryo-electron microscopy.</title>
        <authorList>
            <person name="Jomaa A."/>
            <person name="Stewart G."/>
            <person name="Martin-Benito J."/>
            <person name="Zielke R."/>
            <person name="Campbell T.L."/>
            <person name="Maddock J.R."/>
            <person name="Brown E.D."/>
            <person name="Ortega J."/>
        </authorList>
    </citation>
    <scope>FUNCTION</scope>
    <scope>STRUCTURE BY ELECTRON MICROSCOPY (11.6 ANGSTROMS)</scope>
    <scope>DISRUPTION PHENOTYPE</scope>
    <source>
        <strain>EB334</strain>
    </source>
</reference>
<reference key="12">
    <citation type="journal article" date="2015" name="RNA">
        <title>The C-terminal helix in the YjeQ zinc-finger domain catalyzes the release of RbfA during 30S ribosome subunit assembly.</title>
        <authorList>
            <person name="Jeganathan A."/>
            <person name="Razi A."/>
            <person name="Thurlow B."/>
            <person name="Ortega J."/>
        </authorList>
    </citation>
    <scope>FUNCTION</scope>
    <scope>SUBUNIT</scope>
    <scope>DOMAIN</scope>
    <scope>DISRUPTION PHENOTYPE</scope>
    <scope>MUTAGENESIS OF 298-LYS--ARG-300 AND 320-LYS--ASP-350</scope>
    <source>
        <strain>K12 / MG1655 / ATCC 47076</strain>
    </source>
</reference>
<reference key="13">
    <citation type="journal article" date="2016" name="Nucleic Acids Res.">
        <title>Binding properties of YjeQ (RsgA), RbfA, RimM and Era to assembly intermediates of the 30S subunit.</title>
        <authorList>
            <person name="Thurlow B."/>
            <person name="Davis J.H."/>
            <person name="Leong V."/>
            <person name="Moraes T.F."/>
            <person name="Williamson J.R."/>
            <person name="Ortega J."/>
        </authorList>
    </citation>
    <scope>FUNCTION</scope>
    <scope>SUBUNIT</scope>
    <scope>DISRUPTION PHENOTYPE</scope>
    <source>
        <strain>K12 / BW25113</strain>
    </source>
</reference>
<reference evidence="22" key="14">
    <citation type="journal article" date="2011" name="Proc. Natl. Acad. Sci. U.S.A.">
        <title>Structural basis for the function of a small GTPase RsgA on the 30S ribosomal subunit maturation revealed by cryoelectron microscopy.</title>
        <authorList>
            <person name="Guo Q."/>
            <person name="Yuan Y."/>
            <person name="Xu Y."/>
            <person name="Feng B."/>
            <person name="Liu L."/>
            <person name="Chen K."/>
            <person name="Sun M."/>
            <person name="Yang Z."/>
            <person name="Lei J."/>
            <person name="Gao N."/>
        </authorList>
    </citation>
    <scope>STRUCTURE BY ELECTRON MICROSCOPY (9.80 ANGSTROMS) IN GMP-PNP-BOUND FORM ON THE 30S RIBOSOME</scope>
    <scope>SUBUNIT</scope>
    <scope>RRNA-BINDING</scope>
    <source>
        <strain>K12 / DH5-alpha</strain>
    </source>
</reference>
<reference evidence="23" key="15">
    <citation type="journal article" date="2011" name="RNA">
        <title>Cryo-electron microscopy structure of the 30S subunit in complex with the YjeQ biogenesis factor.</title>
        <authorList>
            <person name="Jomaa A."/>
            <person name="Stewart G."/>
            <person name="Mears J.A."/>
            <person name="Kireeva I."/>
            <person name="Brown E.D."/>
            <person name="Ortega J."/>
        </authorList>
    </citation>
    <scope>STRUCTURE BY ELECTRON MICROSCOPY (16.50 ANGSTROMS) OF 35-337 IN GMP-PNP-BOUND FORM ON THE 30S RIBOSOME</scope>
    <scope>SUBUNIT</scope>
    <scope>RRNA-BINDING</scope>
    <source>
        <strain>K12 / BW25113</strain>
        <strain>K12 / MG1655 / ATCC 47076</strain>
    </source>
</reference>